<accession>A4IX24</accession>
<protein>
    <recommendedName>
        <fullName evidence="1">Large ribosomal subunit protein uL13</fullName>
    </recommendedName>
    <alternativeName>
        <fullName evidence="2">50S ribosomal protein L13</fullName>
    </alternativeName>
</protein>
<name>RL13_FRATW</name>
<feature type="chain" id="PRO_1000055385" description="Large ribosomal subunit protein uL13">
    <location>
        <begin position="1"/>
        <end position="142"/>
    </location>
</feature>
<evidence type="ECO:0000255" key="1">
    <source>
        <dbReference type="HAMAP-Rule" id="MF_01366"/>
    </source>
</evidence>
<evidence type="ECO:0000305" key="2"/>
<sequence>MKTFTAKPSNIKREWLLIDATDKTLGRLATEVAMILRGKNKPEYTPHMDTGDYVVIVNAEKVAVTGNKRKAKTYYHHTGYIGGIKSVSFEKLIATHPERAIEKAVRGMLPRTPLGRTMFKKLKVYAGEAHPHTAQQPKAHNI</sequence>
<dbReference type="EMBL" id="CP000608">
    <property type="protein sequence ID" value="ABO46476.1"/>
    <property type="molecule type" value="Genomic_DNA"/>
</dbReference>
<dbReference type="RefSeq" id="WP_003016252.1">
    <property type="nucleotide sequence ID" value="NC_009257.1"/>
</dbReference>
<dbReference type="SMR" id="A4IX24"/>
<dbReference type="GeneID" id="75264980"/>
<dbReference type="KEGG" id="ftw:FTW_0567"/>
<dbReference type="HOGENOM" id="CLU_082184_2_2_6"/>
<dbReference type="GO" id="GO:0022625">
    <property type="term" value="C:cytosolic large ribosomal subunit"/>
    <property type="evidence" value="ECO:0007669"/>
    <property type="project" value="TreeGrafter"/>
</dbReference>
<dbReference type="GO" id="GO:0003729">
    <property type="term" value="F:mRNA binding"/>
    <property type="evidence" value="ECO:0007669"/>
    <property type="project" value="TreeGrafter"/>
</dbReference>
<dbReference type="GO" id="GO:0003735">
    <property type="term" value="F:structural constituent of ribosome"/>
    <property type="evidence" value="ECO:0007669"/>
    <property type="project" value="InterPro"/>
</dbReference>
<dbReference type="GO" id="GO:0017148">
    <property type="term" value="P:negative regulation of translation"/>
    <property type="evidence" value="ECO:0007669"/>
    <property type="project" value="TreeGrafter"/>
</dbReference>
<dbReference type="GO" id="GO:0006412">
    <property type="term" value="P:translation"/>
    <property type="evidence" value="ECO:0007669"/>
    <property type="project" value="UniProtKB-UniRule"/>
</dbReference>
<dbReference type="CDD" id="cd00392">
    <property type="entry name" value="Ribosomal_L13"/>
    <property type="match status" value="1"/>
</dbReference>
<dbReference type="FunFam" id="3.90.1180.10:FF:000001">
    <property type="entry name" value="50S ribosomal protein L13"/>
    <property type="match status" value="1"/>
</dbReference>
<dbReference type="Gene3D" id="3.90.1180.10">
    <property type="entry name" value="Ribosomal protein L13"/>
    <property type="match status" value="1"/>
</dbReference>
<dbReference type="HAMAP" id="MF_01366">
    <property type="entry name" value="Ribosomal_uL13"/>
    <property type="match status" value="1"/>
</dbReference>
<dbReference type="InterPro" id="IPR005822">
    <property type="entry name" value="Ribosomal_uL13"/>
</dbReference>
<dbReference type="InterPro" id="IPR005823">
    <property type="entry name" value="Ribosomal_uL13_bac-type"/>
</dbReference>
<dbReference type="InterPro" id="IPR023563">
    <property type="entry name" value="Ribosomal_uL13_CS"/>
</dbReference>
<dbReference type="InterPro" id="IPR036899">
    <property type="entry name" value="Ribosomal_uL13_sf"/>
</dbReference>
<dbReference type="NCBIfam" id="TIGR01066">
    <property type="entry name" value="rplM_bact"/>
    <property type="match status" value="1"/>
</dbReference>
<dbReference type="PANTHER" id="PTHR11545:SF2">
    <property type="entry name" value="LARGE RIBOSOMAL SUBUNIT PROTEIN UL13M"/>
    <property type="match status" value="1"/>
</dbReference>
<dbReference type="PANTHER" id="PTHR11545">
    <property type="entry name" value="RIBOSOMAL PROTEIN L13"/>
    <property type="match status" value="1"/>
</dbReference>
<dbReference type="Pfam" id="PF00572">
    <property type="entry name" value="Ribosomal_L13"/>
    <property type="match status" value="1"/>
</dbReference>
<dbReference type="PIRSF" id="PIRSF002181">
    <property type="entry name" value="Ribosomal_L13"/>
    <property type="match status" value="1"/>
</dbReference>
<dbReference type="SUPFAM" id="SSF52161">
    <property type="entry name" value="Ribosomal protein L13"/>
    <property type="match status" value="1"/>
</dbReference>
<dbReference type="PROSITE" id="PS00783">
    <property type="entry name" value="RIBOSOMAL_L13"/>
    <property type="match status" value="1"/>
</dbReference>
<keyword id="KW-0687">Ribonucleoprotein</keyword>
<keyword id="KW-0689">Ribosomal protein</keyword>
<organism>
    <name type="scientific">Francisella tularensis subsp. tularensis (strain WY96-3418)</name>
    <dbReference type="NCBI Taxonomy" id="418136"/>
    <lineage>
        <taxon>Bacteria</taxon>
        <taxon>Pseudomonadati</taxon>
        <taxon>Pseudomonadota</taxon>
        <taxon>Gammaproteobacteria</taxon>
        <taxon>Thiotrichales</taxon>
        <taxon>Francisellaceae</taxon>
        <taxon>Francisella</taxon>
    </lineage>
</organism>
<proteinExistence type="inferred from homology"/>
<reference key="1">
    <citation type="journal article" date="2007" name="PLoS ONE">
        <title>Complete genomic characterization of a pathogenic A.II strain of Francisella tularensis subspecies tularensis.</title>
        <authorList>
            <person name="Beckstrom-Sternberg S.M."/>
            <person name="Auerbach R.K."/>
            <person name="Godbole S."/>
            <person name="Pearson J.V."/>
            <person name="Beckstrom-Sternberg J.S."/>
            <person name="Deng Z."/>
            <person name="Munk C."/>
            <person name="Kubota K."/>
            <person name="Zhou Y."/>
            <person name="Bruce D."/>
            <person name="Noronha J."/>
            <person name="Scheuermann R.H."/>
            <person name="Wang A."/>
            <person name="Wei X."/>
            <person name="Wang J."/>
            <person name="Hao J."/>
            <person name="Wagner D.M."/>
            <person name="Brettin T.S."/>
            <person name="Brown N."/>
            <person name="Gilna P."/>
            <person name="Keim P.S."/>
        </authorList>
    </citation>
    <scope>NUCLEOTIDE SEQUENCE [LARGE SCALE GENOMIC DNA]</scope>
    <source>
        <strain>WY96-3418</strain>
    </source>
</reference>
<gene>
    <name evidence="1" type="primary">rplM</name>
    <name type="ordered locus">FTW_0567</name>
</gene>
<comment type="function">
    <text evidence="1">This protein is one of the early assembly proteins of the 50S ribosomal subunit, although it is not seen to bind rRNA by itself. It is important during the early stages of 50S assembly.</text>
</comment>
<comment type="subunit">
    <text evidence="1">Part of the 50S ribosomal subunit.</text>
</comment>
<comment type="similarity">
    <text evidence="1">Belongs to the universal ribosomal protein uL13 family.</text>
</comment>